<reference key="1">
    <citation type="journal article" date="2005" name="Proc. Natl. Acad. Sci. U.S.A.">
        <title>Complete genome sequence of Vibrio fischeri: a symbiotic bacterium with pathogenic congeners.</title>
        <authorList>
            <person name="Ruby E.G."/>
            <person name="Urbanowski M."/>
            <person name="Campbell J."/>
            <person name="Dunn A."/>
            <person name="Faini M."/>
            <person name="Gunsalus R."/>
            <person name="Lostroh P."/>
            <person name="Lupp C."/>
            <person name="McCann J."/>
            <person name="Millikan D."/>
            <person name="Schaefer A."/>
            <person name="Stabb E."/>
            <person name="Stevens A."/>
            <person name="Visick K."/>
            <person name="Whistler C."/>
            <person name="Greenberg E.P."/>
        </authorList>
    </citation>
    <scope>NUCLEOTIDE SEQUENCE [LARGE SCALE GENOMIC DNA]</scope>
    <source>
        <strain>ATCC 700601 / ES114</strain>
    </source>
</reference>
<name>LOLA_ALIF1</name>
<dbReference type="EMBL" id="CP000020">
    <property type="protein sequence ID" value="AAW85401.1"/>
    <property type="molecule type" value="Genomic_DNA"/>
</dbReference>
<dbReference type="RefSeq" id="WP_011261566.1">
    <property type="nucleotide sequence ID" value="NC_006840.2"/>
</dbReference>
<dbReference type="RefSeq" id="YP_204289.1">
    <property type="nucleotide sequence ID" value="NC_006840.2"/>
</dbReference>
<dbReference type="SMR" id="Q5E6E5"/>
<dbReference type="STRING" id="312309.VF_0906"/>
<dbReference type="EnsemblBacteria" id="AAW85401">
    <property type="protein sequence ID" value="AAW85401"/>
    <property type="gene ID" value="VF_0906"/>
</dbReference>
<dbReference type="GeneID" id="54163574"/>
<dbReference type="KEGG" id="vfi:VF_0906"/>
<dbReference type="PATRIC" id="fig|312309.11.peg.902"/>
<dbReference type="eggNOG" id="COG2834">
    <property type="taxonomic scope" value="Bacteria"/>
</dbReference>
<dbReference type="HOGENOM" id="CLU_087560_1_1_6"/>
<dbReference type="OrthoDB" id="9787361at2"/>
<dbReference type="Proteomes" id="UP000000537">
    <property type="component" value="Chromosome I"/>
</dbReference>
<dbReference type="GO" id="GO:0030288">
    <property type="term" value="C:outer membrane-bounded periplasmic space"/>
    <property type="evidence" value="ECO:0007669"/>
    <property type="project" value="TreeGrafter"/>
</dbReference>
<dbReference type="GO" id="GO:0044874">
    <property type="term" value="P:lipoprotein localization to outer membrane"/>
    <property type="evidence" value="ECO:0007669"/>
    <property type="project" value="UniProtKB-UniRule"/>
</dbReference>
<dbReference type="GO" id="GO:0042953">
    <property type="term" value="P:lipoprotein transport"/>
    <property type="evidence" value="ECO:0007669"/>
    <property type="project" value="InterPro"/>
</dbReference>
<dbReference type="CDD" id="cd16325">
    <property type="entry name" value="LolA"/>
    <property type="match status" value="1"/>
</dbReference>
<dbReference type="Gene3D" id="2.50.20.10">
    <property type="entry name" value="Lipoprotein localisation LolA/LolB/LppX"/>
    <property type="match status" value="1"/>
</dbReference>
<dbReference type="HAMAP" id="MF_00240">
    <property type="entry name" value="LolA"/>
    <property type="match status" value="1"/>
</dbReference>
<dbReference type="InterPro" id="IPR029046">
    <property type="entry name" value="LolA/LolB/LppX"/>
</dbReference>
<dbReference type="InterPro" id="IPR004564">
    <property type="entry name" value="OM_lipoprot_carrier_LolA-like"/>
</dbReference>
<dbReference type="InterPro" id="IPR018323">
    <property type="entry name" value="OM_lipoprot_carrier_LolA_Pbac"/>
</dbReference>
<dbReference type="NCBIfam" id="TIGR00547">
    <property type="entry name" value="lolA"/>
    <property type="match status" value="1"/>
</dbReference>
<dbReference type="PANTHER" id="PTHR35869">
    <property type="entry name" value="OUTER-MEMBRANE LIPOPROTEIN CARRIER PROTEIN"/>
    <property type="match status" value="1"/>
</dbReference>
<dbReference type="PANTHER" id="PTHR35869:SF1">
    <property type="entry name" value="OUTER-MEMBRANE LIPOPROTEIN CARRIER PROTEIN"/>
    <property type="match status" value="1"/>
</dbReference>
<dbReference type="Pfam" id="PF03548">
    <property type="entry name" value="LolA"/>
    <property type="match status" value="1"/>
</dbReference>
<dbReference type="SUPFAM" id="SSF89392">
    <property type="entry name" value="Prokaryotic lipoproteins and lipoprotein localization factors"/>
    <property type="match status" value="1"/>
</dbReference>
<organism>
    <name type="scientific">Aliivibrio fischeri (strain ATCC 700601 / ES114)</name>
    <name type="common">Vibrio fischeri</name>
    <dbReference type="NCBI Taxonomy" id="312309"/>
    <lineage>
        <taxon>Bacteria</taxon>
        <taxon>Pseudomonadati</taxon>
        <taxon>Pseudomonadota</taxon>
        <taxon>Gammaproteobacteria</taxon>
        <taxon>Vibrionales</taxon>
        <taxon>Vibrionaceae</taxon>
        <taxon>Aliivibrio</taxon>
    </lineage>
</organism>
<proteinExistence type="inferred from homology"/>
<gene>
    <name evidence="1" type="primary">lolA</name>
    <name type="ordered locus">VF_0906</name>
</gene>
<comment type="function">
    <text evidence="1">Participates in the translocation of lipoproteins from the inner membrane to the outer membrane. Only forms a complex with a lipoprotein if the residue after the N-terminal Cys is not an aspartate (The Asp acts as a targeting signal to indicate that the lipoprotein should stay in the inner membrane).</text>
</comment>
<comment type="subunit">
    <text evidence="1">Monomer.</text>
</comment>
<comment type="subcellular location">
    <subcellularLocation>
        <location evidence="1">Periplasm</location>
    </subcellularLocation>
</comment>
<comment type="similarity">
    <text evidence="1">Belongs to the LolA family.</text>
</comment>
<feature type="signal peptide" evidence="1">
    <location>
        <begin position="1"/>
        <end position="17"/>
    </location>
</feature>
<feature type="chain" id="PRO_0000018279" description="Outer-membrane lipoprotein carrier protein">
    <location>
        <begin position="18"/>
        <end position="198"/>
    </location>
</feature>
<sequence>MKKFLFSLCLLSSTVLASPQSELTERLNQNAGFEAGFTQKVLSPEGDVLMQGEGDVKILRPNLFRWHTQTPDENLLVTDGNTLWYYNPFVEQVTLMGLEKATTQTPFVLLTRNKASDWDNYSVSQNGDAFTVSPKADSAVKSEFIVRIQENGKVTGFSVVEQDGQRSDFDFTKFEAKKPAKDNFTFAIPDGVDIDDQR</sequence>
<protein>
    <recommendedName>
        <fullName evidence="1">Outer-membrane lipoprotein carrier protein</fullName>
    </recommendedName>
</protein>
<evidence type="ECO:0000255" key="1">
    <source>
        <dbReference type="HAMAP-Rule" id="MF_00240"/>
    </source>
</evidence>
<accession>Q5E6E5</accession>
<keyword id="KW-0143">Chaperone</keyword>
<keyword id="KW-0574">Periplasm</keyword>
<keyword id="KW-0653">Protein transport</keyword>
<keyword id="KW-1185">Reference proteome</keyword>
<keyword id="KW-0732">Signal</keyword>
<keyword id="KW-0813">Transport</keyword>